<evidence type="ECO:0000250" key="1">
    <source>
        <dbReference type="UniProtKB" id="O60760"/>
    </source>
</evidence>
<evidence type="ECO:0000250" key="2">
    <source>
        <dbReference type="UniProtKB" id="P46088"/>
    </source>
</evidence>
<evidence type="ECO:0000250" key="3">
    <source>
        <dbReference type="UniProtKB" id="P46436"/>
    </source>
</evidence>
<evidence type="ECO:0000269" key="4">
    <source>
    </source>
</evidence>
<evidence type="ECO:0000305" key="5"/>
<dbReference type="EC" id="2.5.1.18"/>
<dbReference type="EMBL" id="FO081119">
    <property type="protein sequence ID" value="CCD69255.1"/>
    <property type="molecule type" value="Genomic_DNA"/>
</dbReference>
<dbReference type="PIR" id="T29985">
    <property type="entry name" value="T29985"/>
</dbReference>
<dbReference type="RefSeq" id="NP_494883.1">
    <property type="nucleotide sequence ID" value="NM_062482.8"/>
</dbReference>
<dbReference type="SMR" id="P91253"/>
<dbReference type="BioGRID" id="39196">
    <property type="interactions" value="54"/>
</dbReference>
<dbReference type="DIP" id="DIP-24504N"/>
<dbReference type="FunCoup" id="P91253">
    <property type="interactions" value="126"/>
</dbReference>
<dbReference type="IntAct" id="P91253">
    <property type="interactions" value="1"/>
</dbReference>
<dbReference type="STRING" id="6239.F11G11.2.1"/>
<dbReference type="PaxDb" id="6239-F11G11.2"/>
<dbReference type="PeptideAtlas" id="P91253"/>
<dbReference type="EnsemblMetazoa" id="F11G11.2.1">
    <property type="protein sequence ID" value="F11G11.2.1"/>
    <property type="gene ID" value="WBGene00001755"/>
</dbReference>
<dbReference type="GeneID" id="173842"/>
<dbReference type="KEGG" id="cel:CELE_F11G11.2"/>
<dbReference type="UCSC" id="F11G11.2">
    <property type="organism name" value="c. elegans"/>
</dbReference>
<dbReference type="AGR" id="WB:WBGene00001755"/>
<dbReference type="CTD" id="173842"/>
<dbReference type="WormBase" id="F11G11.2">
    <property type="protein sequence ID" value="CE07055"/>
    <property type="gene ID" value="WBGene00001755"/>
    <property type="gene designation" value="gst-7"/>
</dbReference>
<dbReference type="eggNOG" id="KOG1695">
    <property type="taxonomic scope" value="Eukaryota"/>
</dbReference>
<dbReference type="GeneTree" id="ENSGT00970000196005"/>
<dbReference type="HOGENOM" id="CLU_039475_1_1_1"/>
<dbReference type="InParanoid" id="P91253"/>
<dbReference type="OMA" id="EVRPYFM"/>
<dbReference type="OrthoDB" id="414243at2759"/>
<dbReference type="PhylomeDB" id="P91253"/>
<dbReference type="PRO" id="PR:P91253"/>
<dbReference type="Proteomes" id="UP000001940">
    <property type="component" value="Chromosome II"/>
</dbReference>
<dbReference type="GO" id="GO:0004364">
    <property type="term" value="F:glutathione transferase activity"/>
    <property type="evidence" value="ECO:0000318"/>
    <property type="project" value="GO_Central"/>
</dbReference>
<dbReference type="GO" id="GO:0006749">
    <property type="term" value="P:glutathione metabolic process"/>
    <property type="evidence" value="ECO:0000318"/>
    <property type="project" value="GO_Central"/>
</dbReference>
<dbReference type="GO" id="GO:0045087">
    <property type="term" value="P:innate immune response"/>
    <property type="evidence" value="ECO:0007007"/>
    <property type="project" value="WormBase"/>
</dbReference>
<dbReference type="CDD" id="cd03192">
    <property type="entry name" value="GST_C_Sigma_like"/>
    <property type="match status" value="1"/>
</dbReference>
<dbReference type="CDD" id="cd03039">
    <property type="entry name" value="GST_N_Sigma_like"/>
    <property type="match status" value="1"/>
</dbReference>
<dbReference type="FunFam" id="1.20.1050.10:FF:000031">
    <property type="entry name" value="Glutathione S-Transferase"/>
    <property type="match status" value="1"/>
</dbReference>
<dbReference type="FunFam" id="3.40.30.10:FF:000035">
    <property type="entry name" value="hematopoietic prostaglandin D synthase"/>
    <property type="match status" value="1"/>
</dbReference>
<dbReference type="Gene3D" id="1.20.1050.10">
    <property type="match status" value="1"/>
</dbReference>
<dbReference type="Gene3D" id="3.40.30.10">
    <property type="entry name" value="Glutaredoxin"/>
    <property type="match status" value="1"/>
</dbReference>
<dbReference type="InterPro" id="IPR010987">
    <property type="entry name" value="Glutathione-S-Trfase_C-like"/>
</dbReference>
<dbReference type="InterPro" id="IPR036282">
    <property type="entry name" value="Glutathione-S-Trfase_C_sf"/>
</dbReference>
<dbReference type="InterPro" id="IPR040079">
    <property type="entry name" value="Glutathione_S-Trfase"/>
</dbReference>
<dbReference type="InterPro" id="IPR004045">
    <property type="entry name" value="Glutathione_S-Trfase_N"/>
</dbReference>
<dbReference type="InterPro" id="IPR004046">
    <property type="entry name" value="GST_C"/>
</dbReference>
<dbReference type="InterPro" id="IPR050213">
    <property type="entry name" value="GST_superfamily"/>
</dbReference>
<dbReference type="InterPro" id="IPR036249">
    <property type="entry name" value="Thioredoxin-like_sf"/>
</dbReference>
<dbReference type="PANTHER" id="PTHR11571">
    <property type="entry name" value="GLUTATHIONE S-TRANSFERASE"/>
    <property type="match status" value="1"/>
</dbReference>
<dbReference type="PANTHER" id="PTHR11571:SF98">
    <property type="entry name" value="GLUTATHIONE S-TRANSFERASE 7-RELATED"/>
    <property type="match status" value="1"/>
</dbReference>
<dbReference type="Pfam" id="PF14497">
    <property type="entry name" value="GST_C_3"/>
    <property type="match status" value="1"/>
</dbReference>
<dbReference type="Pfam" id="PF02798">
    <property type="entry name" value="GST_N"/>
    <property type="match status" value="1"/>
</dbReference>
<dbReference type="SFLD" id="SFLDG01205">
    <property type="entry name" value="AMPS.1"/>
    <property type="match status" value="1"/>
</dbReference>
<dbReference type="SFLD" id="SFLDS00019">
    <property type="entry name" value="Glutathione_Transferase_(cytos"/>
    <property type="match status" value="1"/>
</dbReference>
<dbReference type="SUPFAM" id="SSF47616">
    <property type="entry name" value="GST C-terminal domain-like"/>
    <property type="match status" value="1"/>
</dbReference>
<dbReference type="SUPFAM" id="SSF52833">
    <property type="entry name" value="Thioredoxin-like"/>
    <property type="match status" value="1"/>
</dbReference>
<dbReference type="PROSITE" id="PS50405">
    <property type="entry name" value="GST_CTER"/>
    <property type="match status" value="1"/>
</dbReference>
<dbReference type="PROSITE" id="PS50404">
    <property type="entry name" value="GST_NTER"/>
    <property type="match status" value="1"/>
</dbReference>
<accession>P91253</accession>
<protein>
    <recommendedName>
        <fullName>Probable glutathione S-transferase 7</fullName>
        <ecNumber>2.5.1.18</ecNumber>
    </recommendedName>
    <alternativeName>
        <fullName>GST class-sigma</fullName>
    </alternativeName>
</protein>
<comment type="function">
    <text evidence="3 4">Conjugation of reduced glutathione to a wide number of exogenous and endogenous hydrophobic electrophiles (By similarity). May play a role in the detoxification of reactive oxygen species produced during pathogenic bacterial infection (PubMed:22216003).</text>
</comment>
<comment type="catalytic activity">
    <reaction evidence="3">
        <text>RX + glutathione = an S-substituted glutathione + a halide anion + H(+)</text>
        <dbReference type="Rhea" id="RHEA:16437"/>
        <dbReference type="ChEBI" id="CHEBI:15378"/>
        <dbReference type="ChEBI" id="CHEBI:16042"/>
        <dbReference type="ChEBI" id="CHEBI:17792"/>
        <dbReference type="ChEBI" id="CHEBI:57925"/>
        <dbReference type="ChEBI" id="CHEBI:90779"/>
        <dbReference type="EC" id="2.5.1.18"/>
    </reaction>
</comment>
<comment type="similarity">
    <text evidence="5">Belongs to the GST superfamily. Sigma family.</text>
</comment>
<gene>
    <name type="primary">gst-7</name>
    <name type="ORF">F11G11.2</name>
</gene>
<sequence length="206" mass="23085">MVHYKVSYFPIRGAGEIARQILAYAGQDFEDNRIPKEEWPAVKPSTPFGQLPLLEVDGKVLAQSHAIARYLARQFGINGKCAWEEAQVNSVADQFKDYLNEVRPYFMVKMGFAEGDLDALAKDVFLPGFKKHYGFFANFLKSAGSGYLVGDSLTFVDLLVAQHTADLLAANAALLDEFPQFKAHQEKVHSNANIKKWLETRPVTPF</sequence>
<name>GST7_CAEEL</name>
<organism>
    <name type="scientific">Caenorhabditis elegans</name>
    <dbReference type="NCBI Taxonomy" id="6239"/>
    <lineage>
        <taxon>Eukaryota</taxon>
        <taxon>Metazoa</taxon>
        <taxon>Ecdysozoa</taxon>
        <taxon>Nematoda</taxon>
        <taxon>Chromadorea</taxon>
        <taxon>Rhabditida</taxon>
        <taxon>Rhabditina</taxon>
        <taxon>Rhabditomorpha</taxon>
        <taxon>Rhabditoidea</taxon>
        <taxon>Rhabditidae</taxon>
        <taxon>Peloderinae</taxon>
        <taxon>Caenorhabditis</taxon>
    </lineage>
</organism>
<feature type="chain" id="PRO_0000185930" description="Probable glutathione S-transferase 7">
    <location>
        <begin position="1"/>
        <end position="206"/>
    </location>
</feature>
<feature type="domain" description="GST N-terminal">
    <location>
        <begin position="2"/>
        <end position="79"/>
    </location>
</feature>
<feature type="domain" description="GST C-terminal">
    <location>
        <begin position="81"/>
        <end position="206"/>
    </location>
</feature>
<feature type="binding site" evidence="1">
    <location>
        <position position="8"/>
    </location>
    <ligand>
        <name>glutathione</name>
        <dbReference type="ChEBI" id="CHEBI:57925"/>
    </ligand>
</feature>
<feature type="binding site" evidence="1">
    <location>
        <position position="39"/>
    </location>
    <ligand>
        <name>glutathione</name>
        <dbReference type="ChEBI" id="CHEBI:57925"/>
    </ligand>
</feature>
<feature type="binding site" evidence="2">
    <location>
        <position position="43"/>
    </location>
    <ligand>
        <name>glutathione</name>
        <dbReference type="ChEBI" id="CHEBI:57925"/>
    </ligand>
</feature>
<feature type="binding site" evidence="1">
    <location>
        <begin position="49"/>
        <end position="51"/>
    </location>
    <ligand>
        <name>glutathione</name>
        <dbReference type="ChEBI" id="CHEBI:57925"/>
    </ligand>
</feature>
<feature type="binding site" evidence="1">
    <location>
        <begin position="63"/>
        <end position="64"/>
    </location>
    <ligand>
        <name>glutathione</name>
        <dbReference type="ChEBI" id="CHEBI:57925"/>
    </ligand>
</feature>
<keyword id="KW-1185">Reference proteome</keyword>
<keyword id="KW-0808">Transferase</keyword>
<proteinExistence type="inferred from homology"/>
<reference key="1">
    <citation type="journal article" date="1998" name="Science">
        <title>Genome sequence of the nematode C. elegans: a platform for investigating biology.</title>
        <authorList>
            <consortium name="The C. elegans sequencing consortium"/>
        </authorList>
    </citation>
    <scope>NUCLEOTIDE SEQUENCE [LARGE SCALE GENOMIC DNA]</scope>
    <source>
        <strain>Bristol N2</strain>
    </source>
</reference>
<reference key="2">
    <citation type="journal article" date="2011" name="PLoS Pathog.">
        <title>Ce-Duox1/BLI-3 generated reactive oxygen species trigger protective SKN-1 activity via p38 MAPK signaling during infection in C. elegans.</title>
        <authorList>
            <person name="Hoeven R.V."/>
            <person name="McCallum K.C."/>
            <person name="Cruz M.R."/>
            <person name="Garsin D.A."/>
        </authorList>
    </citation>
    <scope>FUNCTION</scope>
</reference>